<organism>
    <name type="scientific">Francisella tularensis subsp. novicida (strain U112)</name>
    <dbReference type="NCBI Taxonomy" id="401614"/>
    <lineage>
        <taxon>Bacteria</taxon>
        <taxon>Pseudomonadati</taxon>
        <taxon>Pseudomonadota</taxon>
        <taxon>Gammaproteobacteria</taxon>
        <taxon>Thiotrichales</taxon>
        <taxon>Francisellaceae</taxon>
        <taxon>Francisella</taxon>
    </lineage>
</organism>
<comment type="function">
    <text evidence="1">Catalyzes the radical-mediated insertion of two sulfur atoms into the C-6 and C-8 positions of the octanoyl moiety bound to the lipoyl domains of lipoate-dependent enzymes, thereby converting the octanoylated domains into lipoylated derivatives.</text>
</comment>
<comment type="catalytic activity">
    <reaction evidence="1">
        <text>[[Fe-S] cluster scaffold protein carrying a second [4Fe-4S](2+) cluster] + N(6)-octanoyl-L-lysyl-[protein] + 2 oxidized [2Fe-2S]-[ferredoxin] + 2 S-adenosyl-L-methionine + 4 H(+) = [[Fe-S] cluster scaffold protein] + N(6)-[(R)-dihydrolipoyl]-L-lysyl-[protein] + 4 Fe(3+) + 2 hydrogen sulfide + 2 5'-deoxyadenosine + 2 L-methionine + 2 reduced [2Fe-2S]-[ferredoxin]</text>
        <dbReference type="Rhea" id="RHEA:16585"/>
        <dbReference type="Rhea" id="RHEA-COMP:9928"/>
        <dbReference type="Rhea" id="RHEA-COMP:10000"/>
        <dbReference type="Rhea" id="RHEA-COMP:10001"/>
        <dbReference type="Rhea" id="RHEA-COMP:10475"/>
        <dbReference type="Rhea" id="RHEA-COMP:14568"/>
        <dbReference type="Rhea" id="RHEA-COMP:14569"/>
        <dbReference type="ChEBI" id="CHEBI:15378"/>
        <dbReference type="ChEBI" id="CHEBI:17319"/>
        <dbReference type="ChEBI" id="CHEBI:29034"/>
        <dbReference type="ChEBI" id="CHEBI:29919"/>
        <dbReference type="ChEBI" id="CHEBI:33722"/>
        <dbReference type="ChEBI" id="CHEBI:33737"/>
        <dbReference type="ChEBI" id="CHEBI:33738"/>
        <dbReference type="ChEBI" id="CHEBI:57844"/>
        <dbReference type="ChEBI" id="CHEBI:59789"/>
        <dbReference type="ChEBI" id="CHEBI:78809"/>
        <dbReference type="ChEBI" id="CHEBI:83100"/>
        <dbReference type="EC" id="2.8.1.8"/>
    </reaction>
</comment>
<comment type="cofactor">
    <cofactor evidence="1">
        <name>[4Fe-4S] cluster</name>
        <dbReference type="ChEBI" id="CHEBI:49883"/>
    </cofactor>
    <text evidence="1">Binds 2 [4Fe-4S] clusters per subunit. One cluster is coordinated with 3 cysteines and an exchangeable S-adenosyl-L-methionine.</text>
</comment>
<comment type="pathway">
    <text evidence="1">Protein modification; protein lipoylation via endogenous pathway; protein N(6)-(lipoyl)lysine from octanoyl-[acyl-carrier-protein]: step 2/2.</text>
</comment>
<comment type="subcellular location">
    <subcellularLocation>
        <location evidence="1">Cytoplasm</location>
    </subcellularLocation>
</comment>
<comment type="similarity">
    <text evidence="1">Belongs to the radical SAM superfamily. Lipoyl synthase family.</text>
</comment>
<sequence length="327" mass="36840">MKEISGIKVKVESGSKYTTDHGFHAVKDGIRNKKENAVHVRKPDWLKVQKQDSKEYLKVKSITKKHKLSTVCEEARCPNINECWSHGTATIMLMGSVCTRACKFCSVDTGNPKGWLDKDEPMNAAESVKLMGLEYVVLTSVDRDDLEDGGAGHYAATITAIKNLDENIKVEALTPDFAGINENIDKIINTKVDVIAQNIETVERLTHPVRDPRAGYWQTLNFLKYVKQKSPNVLTKTSIMVGLGETDEEIYKTMDDARSVGVDIITLGQYMQPTKHHLSVERFVTPQQFEEYRKVGLEKGFLEVASGPMVRSSYRADRVFKRNNLDL</sequence>
<gene>
    <name evidence="1" type="primary">lipA</name>
    <name type="ordered locus">FTN_1030</name>
</gene>
<evidence type="ECO:0000255" key="1">
    <source>
        <dbReference type="HAMAP-Rule" id="MF_00206"/>
    </source>
</evidence>
<evidence type="ECO:0000255" key="2">
    <source>
        <dbReference type="PROSITE-ProRule" id="PRU01266"/>
    </source>
</evidence>
<proteinExistence type="inferred from homology"/>
<keyword id="KW-0004">4Fe-4S</keyword>
<keyword id="KW-0963">Cytoplasm</keyword>
<keyword id="KW-0408">Iron</keyword>
<keyword id="KW-0411">Iron-sulfur</keyword>
<keyword id="KW-0479">Metal-binding</keyword>
<keyword id="KW-0949">S-adenosyl-L-methionine</keyword>
<keyword id="KW-0808">Transferase</keyword>
<reference key="1">
    <citation type="journal article" date="2007" name="Genome Biol.">
        <title>Comparison of Francisella tularensis genomes reveals evolutionary events associated with the emergence of human pathogenic strains.</title>
        <authorList>
            <person name="Rohmer L."/>
            <person name="Fong C."/>
            <person name="Abmayr S."/>
            <person name="Wasnick M."/>
            <person name="Larson Freeman T.J."/>
            <person name="Radey M."/>
            <person name="Guina T."/>
            <person name="Svensson K."/>
            <person name="Hayden H.S."/>
            <person name="Jacobs M."/>
            <person name="Gallagher L.A."/>
            <person name="Manoil C."/>
            <person name="Ernst R.K."/>
            <person name="Drees B."/>
            <person name="Buckley D."/>
            <person name="Haugen E."/>
            <person name="Bovee D."/>
            <person name="Zhou Y."/>
            <person name="Chang J."/>
            <person name="Levy R."/>
            <person name="Lim R."/>
            <person name="Gillett W."/>
            <person name="Guenthener D."/>
            <person name="Kang A."/>
            <person name="Shaffer S.A."/>
            <person name="Taylor G."/>
            <person name="Chen J."/>
            <person name="Gallis B."/>
            <person name="D'Argenio D.A."/>
            <person name="Forsman M."/>
            <person name="Olson M.V."/>
            <person name="Goodlett D.R."/>
            <person name="Kaul R."/>
            <person name="Miller S.I."/>
            <person name="Brittnacher M.J."/>
        </authorList>
    </citation>
    <scope>NUCLEOTIDE SEQUENCE [LARGE SCALE GENOMIC DNA]</scope>
    <source>
        <strain>U112</strain>
    </source>
</reference>
<protein>
    <recommendedName>
        <fullName evidence="1">Lipoyl synthase</fullName>
        <ecNumber evidence="1">2.8.1.8</ecNumber>
    </recommendedName>
    <alternativeName>
        <fullName evidence="1">Lip-syn</fullName>
        <shortName evidence="1">LS</shortName>
    </alternativeName>
    <alternativeName>
        <fullName evidence="1">Lipoate synthase</fullName>
    </alternativeName>
    <alternativeName>
        <fullName evidence="1">Lipoic acid synthase</fullName>
    </alternativeName>
    <alternativeName>
        <fullName evidence="1">Sulfur insertion protein LipA</fullName>
    </alternativeName>
</protein>
<name>LIPA_FRATN</name>
<feature type="chain" id="PRO_0000325253" description="Lipoyl synthase">
    <location>
        <begin position="1"/>
        <end position="327"/>
    </location>
</feature>
<feature type="domain" description="Radical SAM core" evidence="2">
    <location>
        <begin position="83"/>
        <end position="302"/>
    </location>
</feature>
<feature type="binding site" evidence="1">
    <location>
        <position position="72"/>
    </location>
    <ligand>
        <name>[4Fe-4S] cluster</name>
        <dbReference type="ChEBI" id="CHEBI:49883"/>
        <label>1</label>
    </ligand>
</feature>
<feature type="binding site" evidence="1">
    <location>
        <position position="77"/>
    </location>
    <ligand>
        <name>[4Fe-4S] cluster</name>
        <dbReference type="ChEBI" id="CHEBI:49883"/>
        <label>1</label>
    </ligand>
</feature>
<feature type="binding site" evidence="1">
    <location>
        <position position="83"/>
    </location>
    <ligand>
        <name>[4Fe-4S] cluster</name>
        <dbReference type="ChEBI" id="CHEBI:49883"/>
        <label>1</label>
    </ligand>
</feature>
<feature type="binding site" evidence="1">
    <location>
        <position position="98"/>
    </location>
    <ligand>
        <name>[4Fe-4S] cluster</name>
        <dbReference type="ChEBI" id="CHEBI:49883"/>
        <label>2</label>
        <note>4Fe-4S-S-AdoMet</note>
    </ligand>
</feature>
<feature type="binding site" evidence="1">
    <location>
        <position position="102"/>
    </location>
    <ligand>
        <name>[4Fe-4S] cluster</name>
        <dbReference type="ChEBI" id="CHEBI:49883"/>
        <label>2</label>
        <note>4Fe-4S-S-AdoMet</note>
    </ligand>
</feature>
<feature type="binding site" evidence="1">
    <location>
        <position position="105"/>
    </location>
    <ligand>
        <name>[4Fe-4S] cluster</name>
        <dbReference type="ChEBI" id="CHEBI:49883"/>
        <label>2</label>
        <note>4Fe-4S-S-AdoMet</note>
    </ligand>
</feature>
<feature type="binding site" evidence="1">
    <location>
        <position position="313"/>
    </location>
    <ligand>
        <name>[4Fe-4S] cluster</name>
        <dbReference type="ChEBI" id="CHEBI:49883"/>
        <label>1</label>
    </ligand>
</feature>
<dbReference type="EC" id="2.8.1.8" evidence="1"/>
<dbReference type="EMBL" id="CP000439">
    <property type="protein sequence ID" value="ABK89917.1"/>
    <property type="molecule type" value="Genomic_DNA"/>
</dbReference>
<dbReference type="RefSeq" id="WP_003018819.1">
    <property type="nucleotide sequence ID" value="NZ_CP009633.1"/>
</dbReference>
<dbReference type="SMR" id="A0Q6Q2"/>
<dbReference type="GeneID" id="75265235"/>
<dbReference type="KEGG" id="ftn:FTN_1030"/>
<dbReference type="KEGG" id="ftx:AW25_978"/>
<dbReference type="BioCyc" id="FTUL401614:G1G75-1073-MONOMER"/>
<dbReference type="UniPathway" id="UPA00538">
    <property type="reaction ID" value="UER00593"/>
</dbReference>
<dbReference type="Proteomes" id="UP000000762">
    <property type="component" value="Chromosome"/>
</dbReference>
<dbReference type="GO" id="GO:0005737">
    <property type="term" value="C:cytoplasm"/>
    <property type="evidence" value="ECO:0007669"/>
    <property type="project" value="UniProtKB-SubCell"/>
</dbReference>
<dbReference type="GO" id="GO:0051539">
    <property type="term" value="F:4 iron, 4 sulfur cluster binding"/>
    <property type="evidence" value="ECO:0007669"/>
    <property type="project" value="UniProtKB-UniRule"/>
</dbReference>
<dbReference type="GO" id="GO:0016992">
    <property type="term" value="F:lipoate synthase activity"/>
    <property type="evidence" value="ECO:0007669"/>
    <property type="project" value="UniProtKB-UniRule"/>
</dbReference>
<dbReference type="GO" id="GO:0046872">
    <property type="term" value="F:metal ion binding"/>
    <property type="evidence" value="ECO:0007669"/>
    <property type="project" value="UniProtKB-KW"/>
</dbReference>
<dbReference type="FunFam" id="3.20.20.70:FF:000040">
    <property type="entry name" value="Lipoyl synthase"/>
    <property type="match status" value="1"/>
</dbReference>
<dbReference type="Gene3D" id="3.20.20.70">
    <property type="entry name" value="Aldolase class I"/>
    <property type="match status" value="1"/>
</dbReference>
<dbReference type="HAMAP" id="MF_00206">
    <property type="entry name" value="Lipoyl_synth"/>
    <property type="match status" value="1"/>
</dbReference>
<dbReference type="InterPro" id="IPR013785">
    <property type="entry name" value="Aldolase_TIM"/>
</dbReference>
<dbReference type="InterPro" id="IPR006638">
    <property type="entry name" value="Elp3/MiaA/NifB-like_rSAM"/>
</dbReference>
<dbReference type="InterPro" id="IPR031691">
    <property type="entry name" value="LIAS_N"/>
</dbReference>
<dbReference type="InterPro" id="IPR003698">
    <property type="entry name" value="Lipoyl_synth"/>
</dbReference>
<dbReference type="InterPro" id="IPR007197">
    <property type="entry name" value="rSAM"/>
</dbReference>
<dbReference type="NCBIfam" id="TIGR00510">
    <property type="entry name" value="lipA"/>
    <property type="match status" value="1"/>
</dbReference>
<dbReference type="NCBIfam" id="NF004019">
    <property type="entry name" value="PRK05481.1"/>
    <property type="match status" value="1"/>
</dbReference>
<dbReference type="NCBIfam" id="NF009544">
    <property type="entry name" value="PRK12928.1"/>
    <property type="match status" value="1"/>
</dbReference>
<dbReference type="PANTHER" id="PTHR10949">
    <property type="entry name" value="LIPOYL SYNTHASE"/>
    <property type="match status" value="1"/>
</dbReference>
<dbReference type="PANTHER" id="PTHR10949:SF0">
    <property type="entry name" value="LIPOYL SYNTHASE, MITOCHONDRIAL"/>
    <property type="match status" value="1"/>
</dbReference>
<dbReference type="Pfam" id="PF16881">
    <property type="entry name" value="LIAS_N"/>
    <property type="match status" value="1"/>
</dbReference>
<dbReference type="Pfam" id="PF04055">
    <property type="entry name" value="Radical_SAM"/>
    <property type="match status" value="1"/>
</dbReference>
<dbReference type="PIRSF" id="PIRSF005963">
    <property type="entry name" value="Lipoyl_synth"/>
    <property type="match status" value="1"/>
</dbReference>
<dbReference type="SFLD" id="SFLDF00271">
    <property type="entry name" value="lipoyl_synthase"/>
    <property type="match status" value="1"/>
</dbReference>
<dbReference type="SFLD" id="SFLDG01058">
    <property type="entry name" value="lipoyl_synthase_like"/>
    <property type="match status" value="1"/>
</dbReference>
<dbReference type="SMART" id="SM00729">
    <property type="entry name" value="Elp3"/>
    <property type="match status" value="1"/>
</dbReference>
<dbReference type="SUPFAM" id="SSF102114">
    <property type="entry name" value="Radical SAM enzymes"/>
    <property type="match status" value="1"/>
</dbReference>
<dbReference type="PROSITE" id="PS51918">
    <property type="entry name" value="RADICAL_SAM"/>
    <property type="match status" value="1"/>
</dbReference>
<accession>A0Q6Q2</accession>